<name>SYL_PSE14</name>
<evidence type="ECO:0000255" key="1">
    <source>
        <dbReference type="HAMAP-Rule" id="MF_00049"/>
    </source>
</evidence>
<protein>
    <recommendedName>
        <fullName evidence="1">Leucine--tRNA ligase</fullName>
        <ecNumber evidence="1">6.1.1.4</ecNumber>
    </recommendedName>
    <alternativeName>
        <fullName evidence="1">Leucyl-tRNA synthetase</fullName>
        <shortName evidence="1">LeuRS</shortName>
    </alternativeName>
</protein>
<comment type="catalytic activity">
    <reaction evidence="1">
        <text>tRNA(Leu) + L-leucine + ATP = L-leucyl-tRNA(Leu) + AMP + diphosphate</text>
        <dbReference type="Rhea" id="RHEA:11688"/>
        <dbReference type="Rhea" id="RHEA-COMP:9613"/>
        <dbReference type="Rhea" id="RHEA-COMP:9622"/>
        <dbReference type="ChEBI" id="CHEBI:30616"/>
        <dbReference type="ChEBI" id="CHEBI:33019"/>
        <dbReference type="ChEBI" id="CHEBI:57427"/>
        <dbReference type="ChEBI" id="CHEBI:78442"/>
        <dbReference type="ChEBI" id="CHEBI:78494"/>
        <dbReference type="ChEBI" id="CHEBI:456215"/>
        <dbReference type="EC" id="6.1.1.4"/>
    </reaction>
</comment>
<comment type="subcellular location">
    <subcellularLocation>
        <location evidence="1">Cytoplasm</location>
    </subcellularLocation>
</comment>
<comment type="similarity">
    <text evidence="1">Belongs to the class-I aminoacyl-tRNA synthetase family.</text>
</comment>
<accession>Q48DN1</accession>
<reference key="1">
    <citation type="journal article" date="2005" name="J. Bacteriol.">
        <title>Whole-genome sequence analysis of Pseudomonas syringae pv. phaseolicola 1448A reveals divergence among pathovars in genes involved in virulence and transposition.</title>
        <authorList>
            <person name="Joardar V."/>
            <person name="Lindeberg M."/>
            <person name="Jackson R.W."/>
            <person name="Selengut J."/>
            <person name="Dodson R."/>
            <person name="Brinkac L.M."/>
            <person name="Daugherty S.C."/>
            <person name="DeBoy R.T."/>
            <person name="Durkin A.S."/>
            <person name="Gwinn Giglio M."/>
            <person name="Madupu R."/>
            <person name="Nelson W.C."/>
            <person name="Rosovitz M.J."/>
            <person name="Sullivan S.A."/>
            <person name="Crabtree J."/>
            <person name="Creasy T."/>
            <person name="Davidsen T.M."/>
            <person name="Haft D.H."/>
            <person name="Zafar N."/>
            <person name="Zhou L."/>
            <person name="Halpin R."/>
            <person name="Holley T."/>
            <person name="Khouri H.M."/>
            <person name="Feldblyum T.V."/>
            <person name="White O."/>
            <person name="Fraser C.M."/>
            <person name="Chatterjee A.K."/>
            <person name="Cartinhour S."/>
            <person name="Schneider D."/>
            <person name="Mansfield J.W."/>
            <person name="Collmer A."/>
            <person name="Buell R."/>
        </authorList>
    </citation>
    <scope>NUCLEOTIDE SEQUENCE [LARGE SCALE GENOMIC DNA]</scope>
    <source>
        <strain>1448A / Race 6</strain>
    </source>
</reference>
<dbReference type="EC" id="6.1.1.4" evidence="1"/>
<dbReference type="EMBL" id="CP000058">
    <property type="protein sequence ID" value="AAZ36139.1"/>
    <property type="molecule type" value="Genomic_DNA"/>
</dbReference>
<dbReference type="RefSeq" id="WP_011169541.1">
    <property type="nucleotide sequence ID" value="NC_005773.3"/>
</dbReference>
<dbReference type="SMR" id="Q48DN1"/>
<dbReference type="KEGG" id="psp:PSPPH_4394"/>
<dbReference type="eggNOG" id="COG0495">
    <property type="taxonomic scope" value="Bacteria"/>
</dbReference>
<dbReference type="HOGENOM" id="CLU_004427_0_0_6"/>
<dbReference type="Proteomes" id="UP000000551">
    <property type="component" value="Chromosome"/>
</dbReference>
<dbReference type="GO" id="GO:0005829">
    <property type="term" value="C:cytosol"/>
    <property type="evidence" value="ECO:0007669"/>
    <property type="project" value="TreeGrafter"/>
</dbReference>
<dbReference type="GO" id="GO:0002161">
    <property type="term" value="F:aminoacyl-tRNA deacylase activity"/>
    <property type="evidence" value="ECO:0007669"/>
    <property type="project" value="InterPro"/>
</dbReference>
<dbReference type="GO" id="GO:0005524">
    <property type="term" value="F:ATP binding"/>
    <property type="evidence" value="ECO:0007669"/>
    <property type="project" value="UniProtKB-UniRule"/>
</dbReference>
<dbReference type="GO" id="GO:0004823">
    <property type="term" value="F:leucine-tRNA ligase activity"/>
    <property type="evidence" value="ECO:0007669"/>
    <property type="project" value="UniProtKB-UniRule"/>
</dbReference>
<dbReference type="GO" id="GO:0006429">
    <property type="term" value="P:leucyl-tRNA aminoacylation"/>
    <property type="evidence" value="ECO:0007669"/>
    <property type="project" value="UniProtKB-UniRule"/>
</dbReference>
<dbReference type="CDD" id="cd07958">
    <property type="entry name" value="Anticodon_Ia_Leu_BEm"/>
    <property type="match status" value="1"/>
</dbReference>
<dbReference type="CDD" id="cd00812">
    <property type="entry name" value="LeuRS_core"/>
    <property type="match status" value="1"/>
</dbReference>
<dbReference type="FunFam" id="1.10.730.10:FF:000003">
    <property type="entry name" value="Leucine--tRNA ligase"/>
    <property type="match status" value="1"/>
</dbReference>
<dbReference type="FunFam" id="2.20.28.290:FF:000001">
    <property type="entry name" value="Leucine--tRNA ligase"/>
    <property type="match status" value="1"/>
</dbReference>
<dbReference type="FunFam" id="3.10.20.590:FF:000001">
    <property type="entry name" value="Leucine--tRNA ligase"/>
    <property type="match status" value="1"/>
</dbReference>
<dbReference type="FunFam" id="3.40.50.620:FF:000003">
    <property type="entry name" value="Leucine--tRNA ligase"/>
    <property type="match status" value="1"/>
</dbReference>
<dbReference type="FunFam" id="3.40.50.620:FF:000124">
    <property type="entry name" value="Leucine--tRNA ligase"/>
    <property type="match status" value="1"/>
</dbReference>
<dbReference type="FunFam" id="3.90.740.10:FF:000012">
    <property type="entry name" value="Leucine--tRNA ligase"/>
    <property type="match status" value="1"/>
</dbReference>
<dbReference type="Gene3D" id="2.20.28.290">
    <property type="match status" value="1"/>
</dbReference>
<dbReference type="Gene3D" id="3.10.20.590">
    <property type="match status" value="1"/>
</dbReference>
<dbReference type="Gene3D" id="3.40.50.620">
    <property type="entry name" value="HUPs"/>
    <property type="match status" value="2"/>
</dbReference>
<dbReference type="Gene3D" id="1.10.730.10">
    <property type="entry name" value="Isoleucyl-tRNA Synthetase, Domain 1"/>
    <property type="match status" value="2"/>
</dbReference>
<dbReference type="HAMAP" id="MF_00049_B">
    <property type="entry name" value="Leu_tRNA_synth_B"/>
    <property type="match status" value="1"/>
</dbReference>
<dbReference type="InterPro" id="IPR001412">
    <property type="entry name" value="aa-tRNA-synth_I_CS"/>
</dbReference>
<dbReference type="InterPro" id="IPR002300">
    <property type="entry name" value="aa-tRNA-synth_Ia"/>
</dbReference>
<dbReference type="InterPro" id="IPR002302">
    <property type="entry name" value="Leu-tRNA-ligase"/>
</dbReference>
<dbReference type="InterPro" id="IPR025709">
    <property type="entry name" value="Leu_tRNA-synth_edit"/>
</dbReference>
<dbReference type="InterPro" id="IPR013155">
    <property type="entry name" value="M/V/L/I-tRNA-synth_anticd-bd"/>
</dbReference>
<dbReference type="InterPro" id="IPR015413">
    <property type="entry name" value="Methionyl/Leucyl_tRNA_Synth"/>
</dbReference>
<dbReference type="InterPro" id="IPR014729">
    <property type="entry name" value="Rossmann-like_a/b/a_fold"/>
</dbReference>
<dbReference type="InterPro" id="IPR009080">
    <property type="entry name" value="tRNAsynth_Ia_anticodon-bd"/>
</dbReference>
<dbReference type="InterPro" id="IPR009008">
    <property type="entry name" value="Val/Leu/Ile-tRNA-synth_edit"/>
</dbReference>
<dbReference type="NCBIfam" id="TIGR00396">
    <property type="entry name" value="leuS_bact"/>
    <property type="match status" value="1"/>
</dbReference>
<dbReference type="PANTHER" id="PTHR43740:SF2">
    <property type="entry name" value="LEUCINE--TRNA LIGASE, MITOCHONDRIAL"/>
    <property type="match status" value="1"/>
</dbReference>
<dbReference type="PANTHER" id="PTHR43740">
    <property type="entry name" value="LEUCYL-TRNA SYNTHETASE"/>
    <property type="match status" value="1"/>
</dbReference>
<dbReference type="Pfam" id="PF08264">
    <property type="entry name" value="Anticodon_1"/>
    <property type="match status" value="1"/>
</dbReference>
<dbReference type="Pfam" id="PF00133">
    <property type="entry name" value="tRNA-synt_1"/>
    <property type="match status" value="2"/>
</dbReference>
<dbReference type="Pfam" id="PF13603">
    <property type="entry name" value="tRNA-synt_1_2"/>
    <property type="match status" value="1"/>
</dbReference>
<dbReference type="Pfam" id="PF09334">
    <property type="entry name" value="tRNA-synt_1g"/>
    <property type="match status" value="1"/>
</dbReference>
<dbReference type="PRINTS" id="PR00985">
    <property type="entry name" value="TRNASYNTHLEU"/>
</dbReference>
<dbReference type="SUPFAM" id="SSF47323">
    <property type="entry name" value="Anticodon-binding domain of a subclass of class I aminoacyl-tRNA synthetases"/>
    <property type="match status" value="1"/>
</dbReference>
<dbReference type="SUPFAM" id="SSF52374">
    <property type="entry name" value="Nucleotidylyl transferase"/>
    <property type="match status" value="1"/>
</dbReference>
<dbReference type="SUPFAM" id="SSF50677">
    <property type="entry name" value="ValRS/IleRS/LeuRS editing domain"/>
    <property type="match status" value="1"/>
</dbReference>
<dbReference type="PROSITE" id="PS00178">
    <property type="entry name" value="AA_TRNA_LIGASE_I"/>
    <property type="match status" value="1"/>
</dbReference>
<sequence>MHELYQPREIEAAAQTFWDEQKSFEVSEQPGKDTFYCLSMFPYPSGKLHMGHVRNYTIGDVISRYQRMLGKNVLQPLGWDAFGMPAENAAIDNNVAPAKWTYENIAYMKNQLKSLGLAVDWSREVTTCKPDYYRWEQWLFTRLFEKGVIYRKNGTVNWDPVDQTVLANEQVIDGRGWRSGALIEKREIPMYYFKITAYADELLESLDELPGWPEQVKTMQRNWIGRSRGMEVQFPYDQASIGEAGALKVFTTRPDTLMGATYVAVAAEHPLATLAAQGNPGLQAFIDECKGGSVAEADVATQEKKGQPTSLFVEHPLTGEKLPVWVANYVLMHYGDGAVMAVPAHDERDFEFATHYGLPIKPVVRTSAGDQTPAPWQPAYGEHGELINSGEFTGLNFQAAFDAIEAALVKKSLGQSRTQFRLRDWGISRQRYWGCPIPIVHCDTCGDVPVPEDQLPVVLPEDVVPDGAGSPLARMPEFYECSCPKCGAPAKRETDTMDTFVESSWYYARYASPHYEGGLVEPNAANHWLPVDQYIGGIEHAILHLLYARFFHKLMRDEGLVTSNEPFKNLLTQGMVNAETYFRMETSGKKTWINPADVTLERDAKAKVISAKLTSDGLPVEIGGTEKMSKSKKNGIDPQTMIDQYGADTCRLFMMFASPPDMSLEWSDSGVEGSHRFLRRVWRLAQAHVAQGASTGLDIAALTDDQKTIRRSIHQAIRQASQDIGQNQKFNTAVAQVMTLMNVLEKAPQVTPQDRALLQEGLETVTLLLAPITPHISHELWTQLGHNEPVIDAGWPAFDANALVQDSLQLVIQVNGKLRGHIEMPASASREEVEAAARINENVLRFTDGLTIRKVIVVPGKLVNIVAS</sequence>
<keyword id="KW-0030">Aminoacyl-tRNA synthetase</keyword>
<keyword id="KW-0067">ATP-binding</keyword>
<keyword id="KW-0963">Cytoplasm</keyword>
<keyword id="KW-0436">Ligase</keyword>
<keyword id="KW-0547">Nucleotide-binding</keyword>
<keyword id="KW-0648">Protein biosynthesis</keyword>
<feature type="chain" id="PRO_1000009396" description="Leucine--tRNA ligase">
    <location>
        <begin position="1"/>
        <end position="868"/>
    </location>
</feature>
<feature type="short sequence motif" description="'HIGH' region">
    <location>
        <begin position="42"/>
        <end position="52"/>
    </location>
</feature>
<feature type="short sequence motif" description="'KMSKS' region">
    <location>
        <begin position="627"/>
        <end position="631"/>
    </location>
</feature>
<feature type="binding site" evidence="1">
    <location>
        <position position="630"/>
    </location>
    <ligand>
        <name>ATP</name>
        <dbReference type="ChEBI" id="CHEBI:30616"/>
    </ligand>
</feature>
<organism>
    <name type="scientific">Pseudomonas savastanoi pv. phaseolicola (strain 1448A / Race 6)</name>
    <name type="common">Pseudomonas syringae pv. phaseolicola (strain 1448A / Race 6)</name>
    <dbReference type="NCBI Taxonomy" id="264730"/>
    <lineage>
        <taxon>Bacteria</taxon>
        <taxon>Pseudomonadati</taxon>
        <taxon>Pseudomonadota</taxon>
        <taxon>Gammaproteobacteria</taxon>
        <taxon>Pseudomonadales</taxon>
        <taxon>Pseudomonadaceae</taxon>
        <taxon>Pseudomonas</taxon>
    </lineage>
</organism>
<gene>
    <name evidence="1" type="primary">leuS</name>
    <name type="ordered locus">PSPPH_4394</name>
</gene>
<proteinExistence type="inferred from homology"/>